<organismHost>
    <name type="scientific">Aves</name>
    <dbReference type="NCBI Taxonomy" id="8782"/>
</organismHost>
<organismHost>
    <name type="scientific">Homo sapiens</name>
    <name type="common">Human</name>
    <dbReference type="NCBI Taxonomy" id="9606"/>
</organismHost>
<organismHost>
    <name type="scientific">Sus scrofa</name>
    <name type="common">Pig</name>
    <dbReference type="NCBI Taxonomy" id="9823"/>
</organismHost>
<proteinExistence type="evidence at protein level"/>
<protein>
    <recommendedName>
        <fullName evidence="1">Non-structural protein 1</fullName>
        <shortName evidence="1">NS1</shortName>
    </recommendedName>
    <alternativeName>
        <fullName evidence="1">NS1A</fullName>
    </alternativeName>
</protein>
<keyword id="KW-0025">Alternative splicing</keyword>
<keyword id="KW-1262">Eukaryotic host gene expression shutoff by virus</keyword>
<keyword id="KW-1035">Host cytoplasm</keyword>
<keyword id="KW-1190">Host gene expression shutoff by virus</keyword>
<keyword id="KW-1192">Host mRNA suppression by virus</keyword>
<keyword id="KW-1048">Host nucleus</keyword>
<keyword id="KW-0945">Host-virus interaction</keyword>
<keyword id="KW-1090">Inhibition of host innate immune response by virus</keyword>
<keyword id="KW-1114">Inhibition of host interferon signaling pathway by virus</keyword>
<keyword id="KW-1102">Inhibition of host PKR by virus</keyword>
<keyword id="KW-1103">Inhibition of host pre-mRNA processing by virus</keyword>
<keyword id="KW-1088">Inhibition of host RIG-I by virus</keyword>
<keyword id="KW-1113">Inhibition of host RLR pathway by virus</keyword>
<keyword id="KW-0922">Interferon antiviral system evasion</keyword>
<keyword id="KW-0694">RNA-binding</keyword>
<keyword id="KW-0832">Ubl conjugation</keyword>
<keyword id="KW-0899">Viral immunoevasion</keyword>
<comment type="function">
    <text evidence="1">Inhibits post-transcriptional processing of cellular pre-mRNA, by binding and inhibiting two cellular proteins that are required for the 3'-end processing of cellular pre-mRNAs: the 30 kDa cleavage and polyadenylation specificity factor/CPSF4 and the poly(A)-binding protein 2/PABPN1. In turn, unprocessed 3' end pre-mRNAs accumulate in the host nucleus and are no longer exported to the cytoplasm. Cellular protein synthesis is thereby shut off very early after virus infection. Viral protein synthesis is not affected by the inhibition of the cellular 3' end processing machinery because the poly(A) tails of viral mRNAs are produced by the viral polymerase through a stuttering mechanism. Prevents the establishment of the cellular antiviral state by inhibiting TRIM25-mediated RIGI ubiquitination, which normally triggers the antiviral transduction signal that leads to the activation of type I IFN genes by transcription factors IRF3 and IRF7. Also binds poly(A) and U6 snRNA. Inhibits the integrated stress response (ISR) in the infected cell by blocking dsRNA binding by EIF2AK2/PKR and further phosphorylation of EIF2S1/EIF-2ALPHA. Stress granule formation is thus inhibited, which allows protein synthesis and viral replication.</text>
</comment>
<comment type="subunit">
    <text evidence="1 4">Homodimer. Interacts with host TRIM25 (via coiled coil); this interaction specifically inhibits TRIM25 multimerization and TRIM25-mediated RIGI CARD ubiquitination. Interacts with human EIF2AK2/PKR, CPSF4 and PABPN1. Interacts with IVNS1ABP (PubMed:9696811).</text>
</comment>
<comment type="interaction">
    <interactant intactId="EBI-6149498">
        <id>Q82506</id>
    </interactant>
    <interactant intactId="EBI-1018153">
        <id>Q9BUJ2</id>
        <label>HNRNPUL1</label>
    </interactant>
    <organismsDiffer>true</organismsDiffer>
    <experiments>3</experiments>
</comment>
<comment type="interaction">
    <interactant intactId="EBI-6149498">
        <id>Q82506</id>
    </interactant>
    <interactant intactId="EBI-301889">
        <id>Q9UKK6</id>
        <label>NXT1</label>
    </interactant>
    <organismsDiffer>true</organismsDiffer>
    <experiments>5</experiments>
</comment>
<comment type="interaction">
    <interactant intactId="EBI-6149498">
        <id>Q82506</id>
    </interactant>
    <interactant intactId="EBI-346930">
        <id>O00459</id>
        <label>PIK3R2</label>
    </interactant>
    <organismsDiffer>true</organismsDiffer>
    <experiments>2</experiments>
</comment>
<comment type="subcellular location">
    <subcellularLocation>
        <location evidence="1">Host nucleus</location>
    </subcellularLocation>
    <subcellularLocation>
        <location evidence="1">Host cytoplasm</location>
    </subcellularLocation>
    <text evidence="1">In uninfected, transfected cells, NS1 is localized in the nucleus. Only in virus infected cells, the nuclear export signal is unveiled, presumably by a viral protein, and a fraction of NS1 is exported in the cytoplasm.</text>
</comment>
<comment type="alternative products">
    <event type="alternative splicing"/>
    <isoform>
        <id>Q82506-1</id>
        <name>NS1</name>
        <sequence type="displayed"/>
    </isoform>
    <isoform>
        <id>Q89733-1</id>
        <name>NEP</name>
        <name>NS2</name>
        <sequence type="external"/>
    </isoform>
</comment>
<comment type="domain">
    <text evidence="1">The dsRNA-binding region is required for suppression of RNA silencing.</text>
</comment>
<comment type="PTM">
    <text evidence="1">Upon interferon induction, ISGylated via host HERC5; this results in the impairment of NS1 interaction with RNA targets due to its inability to form homodimers and to interact with host EIF2AK2/PKR.</text>
</comment>
<comment type="similarity">
    <text evidence="1">Belongs to the influenza A viruses NS1 family.</text>
</comment>
<sequence>MDPNTVSSFQVDCFLWHVRKRVADQELGDAPFLDRLRRDQKSLRGRGSTLGLDIETATRAGKQIVERILKEESDEALKMTMASVPASRYLTDMTLEEMSRHWFMLMPKQKVAGPLCIRMDQAIMDKNIILKANFSVILDRLETLILLRAFTEEGTIVGEISPLPSLPGHTDEDVKNAVGVLIGGLEWNNNTVRVSETLQRFAWRSSNENGRPPLTPKQKRKMAGTIRSEV</sequence>
<evidence type="ECO:0000255" key="1">
    <source>
        <dbReference type="HAMAP-Rule" id="MF_04066"/>
    </source>
</evidence>
<evidence type="ECO:0000256" key="2">
    <source>
        <dbReference type="SAM" id="MobiDB-lite"/>
    </source>
</evidence>
<evidence type="ECO:0000269" key="3">
    <source>
    </source>
</evidence>
<evidence type="ECO:0000269" key="4">
    <source>
    </source>
</evidence>
<feature type="chain" id="PRO_0000078955" description="Non-structural protein 1">
    <location>
        <begin position="1"/>
        <end position="230"/>
    </location>
</feature>
<feature type="region of interest" description="RNA-binding and homodimerization" evidence="1">
    <location>
        <begin position="1"/>
        <end position="73"/>
    </location>
</feature>
<feature type="region of interest" description="CPSF4-binding" evidence="1">
    <location>
        <begin position="180"/>
        <end position="215"/>
    </location>
</feature>
<feature type="region of interest" description="Disordered" evidence="2">
    <location>
        <begin position="205"/>
        <end position="230"/>
    </location>
</feature>
<feature type="region of interest" description="PABPN1-binding" evidence="1">
    <location>
        <begin position="223"/>
        <end position="230"/>
    </location>
</feature>
<feature type="short sequence motif" description="Nuclear localization signal" evidence="1">
    <location>
        <begin position="34"/>
        <end position="38"/>
    </location>
</feature>
<feature type="short sequence motif" description="Nuclear export signal" evidence="1">
    <location>
        <begin position="137"/>
        <end position="146"/>
    </location>
</feature>
<feature type="mutagenesis site" description="Complete loss of suppression of RNA silencing in Drosophila cells; when associated with A-41." evidence="3">
    <original>R</original>
    <variation>A</variation>
    <location>
        <position position="38"/>
    </location>
</feature>
<feature type="mutagenesis site" description="Complete loss of suppression of RNA silencing in Drosophila cells; when associated with A-38." evidence="3">
    <original>K</original>
    <variation>A</variation>
    <location>
        <position position="41"/>
    </location>
</feature>
<feature type="mutagenesis site" description="Enhanced suppression of RNA silencing in Drosophila cells." evidence="3">
    <original>D</original>
    <variation>E</variation>
    <location>
        <position position="92"/>
    </location>
</feature>
<name>NS1_I33A0</name>
<gene>
    <name evidence="1" type="primary">NS</name>
</gene>
<dbReference type="EMBL" id="U13683">
    <property type="protein sequence ID" value="AAA21582.1"/>
    <property type="molecule type" value="Genomic_RNA"/>
</dbReference>
<dbReference type="SMR" id="Q82506"/>
<dbReference type="DIP" id="DIP-60861N"/>
<dbReference type="IntAct" id="Q82506">
    <property type="interactions" value="9"/>
</dbReference>
<dbReference type="Proteomes" id="UP000000834">
    <property type="component" value="Genome"/>
</dbReference>
<dbReference type="GO" id="GO:0030430">
    <property type="term" value="C:host cell cytoplasm"/>
    <property type="evidence" value="ECO:0007669"/>
    <property type="project" value="UniProtKB-SubCell"/>
</dbReference>
<dbReference type="GO" id="GO:0042025">
    <property type="term" value="C:host cell nucleus"/>
    <property type="evidence" value="ECO:0007669"/>
    <property type="project" value="UniProtKB-SubCell"/>
</dbReference>
<dbReference type="GO" id="GO:0030291">
    <property type="term" value="F:protein serine/threonine kinase inhibitor activity"/>
    <property type="evidence" value="ECO:0007669"/>
    <property type="project" value="UniProtKB-KW"/>
</dbReference>
<dbReference type="GO" id="GO:0003723">
    <property type="term" value="F:RNA binding"/>
    <property type="evidence" value="ECO:0007669"/>
    <property type="project" value="UniProtKB-KW"/>
</dbReference>
<dbReference type="GO" id="GO:0039540">
    <property type="term" value="P:symbiont-mediated suppression of host cytoplasmic pattern recognition receptor signaling pathway via inhibition of RIG-I activity"/>
    <property type="evidence" value="ECO:0007669"/>
    <property type="project" value="UniProtKB-KW"/>
</dbReference>
<dbReference type="GO" id="GO:0039657">
    <property type="term" value="P:symbiont-mediated suppression of host gene expression"/>
    <property type="evidence" value="ECO:0007669"/>
    <property type="project" value="UniProtKB-KW"/>
</dbReference>
<dbReference type="GO" id="GO:0039524">
    <property type="term" value="P:symbiont-mediated suppression of host mRNA processing"/>
    <property type="evidence" value="ECO:0007669"/>
    <property type="project" value="UniProtKB-KW"/>
</dbReference>
<dbReference type="GO" id="GO:0039580">
    <property type="term" value="P:symbiont-mediated suppression of host PKR/eIFalpha signaling"/>
    <property type="evidence" value="ECO:0007669"/>
    <property type="project" value="UniProtKB-KW"/>
</dbReference>
<dbReference type="GO" id="GO:0039502">
    <property type="term" value="P:symbiont-mediated suppression of host type I interferon-mediated signaling pathway"/>
    <property type="evidence" value="ECO:0007669"/>
    <property type="project" value="UniProtKB-KW"/>
</dbReference>
<dbReference type="FunFam" id="1.10.287.10:FF:000001">
    <property type="entry name" value="Non-structural protein 1"/>
    <property type="match status" value="1"/>
</dbReference>
<dbReference type="FunFam" id="3.30.420.330:FF:000001">
    <property type="entry name" value="Non-structural protein 1"/>
    <property type="match status" value="1"/>
</dbReference>
<dbReference type="Gene3D" id="3.30.420.330">
    <property type="entry name" value="Influenza virus non-structural protein, effector domain"/>
    <property type="match status" value="1"/>
</dbReference>
<dbReference type="Gene3D" id="1.10.287.10">
    <property type="entry name" value="S15/NS1, RNA-binding"/>
    <property type="match status" value="1"/>
</dbReference>
<dbReference type="HAMAP" id="MF_04066">
    <property type="entry name" value="INFV_NS1"/>
    <property type="match status" value="1"/>
</dbReference>
<dbReference type="InterPro" id="IPR004208">
    <property type="entry name" value="NS1"/>
</dbReference>
<dbReference type="InterPro" id="IPR000256">
    <property type="entry name" value="NS1A"/>
</dbReference>
<dbReference type="InterPro" id="IPR038064">
    <property type="entry name" value="NS1A_effect_dom-like_sf"/>
</dbReference>
<dbReference type="InterPro" id="IPR009068">
    <property type="entry name" value="uS15_NS1_RNA-bd_sf"/>
</dbReference>
<dbReference type="Pfam" id="PF00600">
    <property type="entry name" value="Flu_NS1"/>
    <property type="match status" value="1"/>
</dbReference>
<dbReference type="SUPFAM" id="SSF143021">
    <property type="entry name" value="Ns1 effector domain-like"/>
    <property type="match status" value="1"/>
</dbReference>
<dbReference type="SUPFAM" id="SSF47060">
    <property type="entry name" value="S15/NS1 RNA-binding domain"/>
    <property type="match status" value="1"/>
</dbReference>
<accession>Q82506</accession>
<reference key="1">
    <citation type="thesis" date="1994" institute="Robert Wood Johnson Medical School" country="United States">
        <authorList>
            <person name="Husak P.J."/>
        </authorList>
    </citation>
    <scope>NUCLEOTIDE SEQUENCE [GENOMIC RNA]</scope>
</reference>
<reference key="2">
    <citation type="journal article" date="1998" name="J. Virol.">
        <title>NS1-Binding protein (NS1-BP): a novel human protein that interacts with the influenza A virus nonstructural NS1 protein is relocalized in the nuclei of infected cells.</title>
        <authorList>
            <person name="Wolff T."/>
            <person name="O'Neill R.E."/>
            <person name="Palese P."/>
        </authorList>
    </citation>
    <scope>INTERACTION WITH IVNS1ABP</scope>
</reference>
<reference key="3">
    <citation type="journal article" date="2004" name="Proc. Natl. Acad. Sci. U.S.A.">
        <title>Interferon antagonist proteins of influenza and vaccinia viruses are suppressors of RNA silencing.</title>
        <authorList>
            <person name="Li W.-X."/>
            <person name="Li H."/>
            <person name="Lu R."/>
            <person name="Li F."/>
            <person name="Dus M."/>
            <person name="Atkinson P."/>
            <person name="Brydon E.W.A."/>
            <person name="Johnson K.L."/>
            <person name="Garcia-Sastre A."/>
            <person name="Ball L.A."/>
            <person name="Palese P."/>
            <person name="Ding S.-W."/>
        </authorList>
    </citation>
    <scope>FUNCTION AS A SUPPRESSOR OF RNA SILENCING</scope>
    <scope>MUTAGENESIS OF ARG-38; LYS-41 AND ASP-92</scope>
    <source>
        <strain>A/WSN/33</strain>
    </source>
</reference>
<reference key="4">
    <citation type="journal article" date="2003" name="Virology">
        <title>Intracellular warfare between human influenza viruses and human cells: the roles of the viral NS1 protein.</title>
        <authorList>
            <person name="Krug R.M."/>
            <person name="Yuan W."/>
            <person name="Noah D.L."/>
            <person name="Latham A.G."/>
        </authorList>
    </citation>
    <scope>REVIEW</scope>
</reference>
<organism>
    <name type="scientific">Influenza A virus (strain A/Wilson-Smith/1933 H1N1)</name>
    <name type="common">Influenza A virus (strain A/WS/1933 H1N1)</name>
    <dbReference type="NCBI Taxonomy" id="381518"/>
    <lineage>
        <taxon>Viruses</taxon>
        <taxon>Riboviria</taxon>
        <taxon>Orthornavirae</taxon>
        <taxon>Negarnaviricota</taxon>
        <taxon>Polyploviricotina</taxon>
        <taxon>Insthoviricetes</taxon>
        <taxon>Articulavirales</taxon>
        <taxon>Orthomyxoviridae</taxon>
        <taxon>Alphainfluenzavirus</taxon>
        <taxon>Alphainfluenzavirus influenzae</taxon>
        <taxon>Influenza A virus</taxon>
    </lineage>
</organism>